<proteinExistence type="inferred from homology"/>
<dbReference type="EC" id="3.6.1.66" evidence="1"/>
<dbReference type="EMBL" id="AE003852">
    <property type="protein sequence ID" value="AAF93629.1"/>
    <property type="molecule type" value="Genomic_DNA"/>
</dbReference>
<dbReference type="PIR" id="H82320">
    <property type="entry name" value="H82320"/>
</dbReference>
<dbReference type="RefSeq" id="NP_230110.1">
    <property type="nucleotide sequence ID" value="NC_002505.1"/>
</dbReference>
<dbReference type="RefSeq" id="WP_000725019.1">
    <property type="nucleotide sequence ID" value="NZ_LT906614.1"/>
</dbReference>
<dbReference type="SMR" id="Q9KUQ9"/>
<dbReference type="STRING" id="243277.VC_0456"/>
<dbReference type="DNASU" id="2615118"/>
<dbReference type="EnsemblBacteria" id="AAF93629">
    <property type="protein sequence ID" value="AAF93629"/>
    <property type="gene ID" value="VC_0456"/>
</dbReference>
<dbReference type="KEGG" id="vch:VC_0456"/>
<dbReference type="PATRIC" id="fig|243277.26.peg.429"/>
<dbReference type="eggNOG" id="COG0127">
    <property type="taxonomic scope" value="Bacteria"/>
</dbReference>
<dbReference type="HOGENOM" id="CLU_082080_0_3_6"/>
<dbReference type="Proteomes" id="UP000000584">
    <property type="component" value="Chromosome 1"/>
</dbReference>
<dbReference type="GO" id="GO:0005737">
    <property type="term" value="C:cytoplasm"/>
    <property type="evidence" value="ECO:0000318"/>
    <property type="project" value="GO_Central"/>
</dbReference>
<dbReference type="GO" id="GO:0005829">
    <property type="term" value="C:cytosol"/>
    <property type="evidence" value="ECO:0000318"/>
    <property type="project" value="GO_Central"/>
</dbReference>
<dbReference type="GO" id="GO:0035870">
    <property type="term" value="F:dITP diphosphatase activity"/>
    <property type="evidence" value="ECO:0007669"/>
    <property type="project" value="RHEA"/>
</dbReference>
<dbReference type="GO" id="GO:0036220">
    <property type="term" value="F:ITP diphosphatase activity"/>
    <property type="evidence" value="ECO:0007669"/>
    <property type="project" value="UniProtKB-EC"/>
</dbReference>
<dbReference type="GO" id="GO:0046872">
    <property type="term" value="F:metal ion binding"/>
    <property type="evidence" value="ECO:0007669"/>
    <property type="project" value="UniProtKB-KW"/>
</dbReference>
<dbReference type="GO" id="GO:0047429">
    <property type="term" value="F:nucleoside triphosphate diphosphatase activity"/>
    <property type="evidence" value="ECO:0000318"/>
    <property type="project" value="GO_Central"/>
</dbReference>
<dbReference type="GO" id="GO:0000166">
    <property type="term" value="F:nucleotide binding"/>
    <property type="evidence" value="ECO:0007669"/>
    <property type="project" value="UniProtKB-KW"/>
</dbReference>
<dbReference type="GO" id="GO:0017111">
    <property type="term" value="F:ribonucleoside triphosphate phosphatase activity"/>
    <property type="evidence" value="ECO:0007669"/>
    <property type="project" value="InterPro"/>
</dbReference>
<dbReference type="GO" id="GO:0036222">
    <property type="term" value="F:XTP diphosphatase activity"/>
    <property type="evidence" value="ECO:0007669"/>
    <property type="project" value="RHEA"/>
</dbReference>
<dbReference type="GO" id="GO:0009143">
    <property type="term" value="P:nucleoside triphosphate catabolic process"/>
    <property type="evidence" value="ECO:0000318"/>
    <property type="project" value="GO_Central"/>
</dbReference>
<dbReference type="GO" id="GO:0009117">
    <property type="term" value="P:nucleotide metabolic process"/>
    <property type="evidence" value="ECO:0007669"/>
    <property type="project" value="UniProtKB-KW"/>
</dbReference>
<dbReference type="GO" id="GO:0009146">
    <property type="term" value="P:purine nucleoside triphosphate catabolic process"/>
    <property type="evidence" value="ECO:0007669"/>
    <property type="project" value="UniProtKB-UniRule"/>
</dbReference>
<dbReference type="CDD" id="cd00515">
    <property type="entry name" value="HAM1"/>
    <property type="match status" value="1"/>
</dbReference>
<dbReference type="FunFam" id="3.90.950.10:FF:000001">
    <property type="entry name" value="dITP/XTP pyrophosphatase"/>
    <property type="match status" value="1"/>
</dbReference>
<dbReference type="Gene3D" id="3.90.950.10">
    <property type="match status" value="1"/>
</dbReference>
<dbReference type="HAMAP" id="MF_01405">
    <property type="entry name" value="Non_canon_purine_NTPase"/>
    <property type="match status" value="1"/>
</dbReference>
<dbReference type="InterPro" id="IPR020922">
    <property type="entry name" value="dITP/XTP_pyrophosphatase"/>
</dbReference>
<dbReference type="InterPro" id="IPR029001">
    <property type="entry name" value="ITPase-like_fam"/>
</dbReference>
<dbReference type="InterPro" id="IPR002637">
    <property type="entry name" value="RdgB/HAM1"/>
</dbReference>
<dbReference type="NCBIfam" id="NF011397">
    <property type="entry name" value="PRK14822.1"/>
    <property type="match status" value="1"/>
</dbReference>
<dbReference type="NCBIfam" id="TIGR00042">
    <property type="entry name" value="RdgB/HAM1 family non-canonical purine NTP pyrophosphatase"/>
    <property type="match status" value="1"/>
</dbReference>
<dbReference type="PANTHER" id="PTHR11067:SF9">
    <property type="entry name" value="INOSINE TRIPHOSPHATE PYROPHOSPHATASE"/>
    <property type="match status" value="1"/>
</dbReference>
<dbReference type="PANTHER" id="PTHR11067">
    <property type="entry name" value="INOSINE TRIPHOSPHATE PYROPHOSPHATASE/HAM1 PROTEIN"/>
    <property type="match status" value="1"/>
</dbReference>
<dbReference type="Pfam" id="PF01725">
    <property type="entry name" value="Ham1p_like"/>
    <property type="match status" value="1"/>
</dbReference>
<dbReference type="SUPFAM" id="SSF52972">
    <property type="entry name" value="ITPase-like"/>
    <property type="match status" value="1"/>
</dbReference>
<name>IXTPA_VIBCH</name>
<evidence type="ECO:0000255" key="1">
    <source>
        <dbReference type="HAMAP-Rule" id="MF_01405"/>
    </source>
</evidence>
<protein>
    <recommendedName>
        <fullName evidence="1">dITP/XTP pyrophosphatase</fullName>
        <ecNumber evidence="1">3.6.1.66</ecNumber>
    </recommendedName>
    <alternativeName>
        <fullName evidence="1">Non-canonical purine NTP pyrophosphatase</fullName>
    </alternativeName>
    <alternativeName>
        <fullName evidence="1">Non-standard purine NTP pyrophosphatase</fullName>
    </alternativeName>
    <alternativeName>
        <fullName evidence="1">Nucleoside-triphosphate diphosphatase</fullName>
    </alternativeName>
    <alternativeName>
        <fullName evidence="1">Nucleoside-triphosphate pyrophosphatase</fullName>
        <shortName evidence="1">NTPase</shortName>
    </alternativeName>
</protein>
<organism>
    <name type="scientific">Vibrio cholerae serotype O1 (strain ATCC 39315 / El Tor Inaba N16961)</name>
    <dbReference type="NCBI Taxonomy" id="243277"/>
    <lineage>
        <taxon>Bacteria</taxon>
        <taxon>Pseudomonadati</taxon>
        <taxon>Pseudomonadota</taxon>
        <taxon>Gammaproteobacteria</taxon>
        <taxon>Vibrionales</taxon>
        <taxon>Vibrionaceae</taxon>
        <taxon>Vibrio</taxon>
    </lineage>
</organism>
<reference key="1">
    <citation type="journal article" date="2000" name="Nature">
        <title>DNA sequence of both chromosomes of the cholera pathogen Vibrio cholerae.</title>
        <authorList>
            <person name="Heidelberg J.F."/>
            <person name="Eisen J.A."/>
            <person name="Nelson W.C."/>
            <person name="Clayton R.A."/>
            <person name="Gwinn M.L."/>
            <person name="Dodson R.J."/>
            <person name="Haft D.H."/>
            <person name="Hickey E.K."/>
            <person name="Peterson J.D."/>
            <person name="Umayam L.A."/>
            <person name="Gill S.R."/>
            <person name="Nelson K.E."/>
            <person name="Read T.D."/>
            <person name="Tettelin H."/>
            <person name="Richardson D.L."/>
            <person name="Ermolaeva M.D."/>
            <person name="Vamathevan J.J."/>
            <person name="Bass S."/>
            <person name="Qin H."/>
            <person name="Dragoi I."/>
            <person name="Sellers P."/>
            <person name="McDonald L.A."/>
            <person name="Utterback T.R."/>
            <person name="Fleischmann R.D."/>
            <person name="Nierman W.C."/>
            <person name="White O."/>
            <person name="Salzberg S.L."/>
            <person name="Smith H.O."/>
            <person name="Colwell R.R."/>
            <person name="Mekalanos J.J."/>
            <person name="Venter J.C."/>
            <person name="Fraser C.M."/>
        </authorList>
    </citation>
    <scope>NUCLEOTIDE SEQUENCE [LARGE SCALE GENOMIC DNA]</scope>
    <source>
        <strain>ATCC 39315 / El Tor Inaba N16961</strain>
    </source>
</reference>
<comment type="function">
    <text evidence="1">Pyrophosphatase that catalyzes the hydrolysis of nucleoside triphosphates to their monophosphate derivatives, with a high preference for the non-canonical purine nucleotides XTP (xanthosine triphosphate), dITP (deoxyinosine triphosphate) and ITP. Seems to function as a house-cleaning enzyme that removes non-canonical purine nucleotides from the nucleotide pool, thus preventing their incorporation into DNA/RNA and avoiding chromosomal lesions.</text>
</comment>
<comment type="catalytic activity">
    <reaction evidence="1">
        <text>XTP + H2O = XMP + diphosphate + H(+)</text>
        <dbReference type="Rhea" id="RHEA:28610"/>
        <dbReference type="ChEBI" id="CHEBI:15377"/>
        <dbReference type="ChEBI" id="CHEBI:15378"/>
        <dbReference type="ChEBI" id="CHEBI:33019"/>
        <dbReference type="ChEBI" id="CHEBI:57464"/>
        <dbReference type="ChEBI" id="CHEBI:61314"/>
        <dbReference type="EC" id="3.6.1.66"/>
    </reaction>
</comment>
<comment type="catalytic activity">
    <reaction evidence="1">
        <text>dITP + H2O = dIMP + diphosphate + H(+)</text>
        <dbReference type="Rhea" id="RHEA:28342"/>
        <dbReference type="ChEBI" id="CHEBI:15377"/>
        <dbReference type="ChEBI" id="CHEBI:15378"/>
        <dbReference type="ChEBI" id="CHEBI:33019"/>
        <dbReference type="ChEBI" id="CHEBI:61194"/>
        <dbReference type="ChEBI" id="CHEBI:61382"/>
        <dbReference type="EC" id="3.6.1.66"/>
    </reaction>
</comment>
<comment type="catalytic activity">
    <reaction evidence="1">
        <text>ITP + H2O = IMP + diphosphate + H(+)</text>
        <dbReference type="Rhea" id="RHEA:29399"/>
        <dbReference type="ChEBI" id="CHEBI:15377"/>
        <dbReference type="ChEBI" id="CHEBI:15378"/>
        <dbReference type="ChEBI" id="CHEBI:33019"/>
        <dbReference type="ChEBI" id="CHEBI:58053"/>
        <dbReference type="ChEBI" id="CHEBI:61402"/>
        <dbReference type="EC" id="3.6.1.66"/>
    </reaction>
</comment>
<comment type="cofactor">
    <cofactor evidence="1">
        <name>Mg(2+)</name>
        <dbReference type="ChEBI" id="CHEBI:18420"/>
    </cofactor>
    <text evidence="1">Binds 1 Mg(2+) ion per subunit.</text>
</comment>
<comment type="subunit">
    <text evidence="1">Homodimer.</text>
</comment>
<comment type="similarity">
    <text evidence="1">Belongs to the HAM1 NTPase family.</text>
</comment>
<keyword id="KW-0378">Hydrolase</keyword>
<keyword id="KW-0460">Magnesium</keyword>
<keyword id="KW-0479">Metal-binding</keyword>
<keyword id="KW-0546">Nucleotide metabolism</keyword>
<keyword id="KW-0547">Nucleotide-binding</keyword>
<keyword id="KW-1185">Reference proteome</keyword>
<accession>Q9KUQ9</accession>
<sequence>MKKIVLATGNQGKVREMADLLSDFGFDVVAQSEFNVPEAAETGTTFIENAIIKARHAAQITGLPTIADDSGLEVDYLNGAPGIYSARYAGEHASDGDNLNKLLMAMQDVPDDQRSARFHCVLVLMRHADDPTPIVCHGKWEGKILTAPHGSNGFGYDPIFWVPEENCASAELEPVRKKQLSHRGKALQKLFKAIEEQRTC</sequence>
<gene>
    <name type="ordered locus">VC_0456</name>
</gene>
<feature type="chain" id="PRO_0000178260" description="dITP/XTP pyrophosphatase">
    <location>
        <begin position="1"/>
        <end position="200"/>
    </location>
</feature>
<feature type="active site" description="Proton acceptor" evidence="1">
    <location>
        <position position="69"/>
    </location>
</feature>
<feature type="binding site" evidence="1">
    <location>
        <begin position="8"/>
        <end position="13"/>
    </location>
    <ligand>
        <name>substrate</name>
    </ligand>
</feature>
<feature type="binding site" evidence="1">
    <location>
        <position position="69"/>
    </location>
    <ligand>
        <name>Mg(2+)</name>
        <dbReference type="ChEBI" id="CHEBI:18420"/>
    </ligand>
</feature>
<feature type="binding site" evidence="1">
    <location>
        <position position="70"/>
    </location>
    <ligand>
        <name>substrate</name>
    </ligand>
</feature>
<feature type="binding site" evidence="1">
    <location>
        <begin position="154"/>
        <end position="157"/>
    </location>
    <ligand>
        <name>substrate</name>
    </ligand>
</feature>
<feature type="binding site" evidence="1">
    <location>
        <position position="177"/>
    </location>
    <ligand>
        <name>substrate</name>
    </ligand>
</feature>
<feature type="binding site" evidence="1">
    <location>
        <begin position="182"/>
        <end position="183"/>
    </location>
    <ligand>
        <name>substrate</name>
    </ligand>
</feature>